<name>RL4_BRUSU</name>
<dbReference type="EMBL" id="DQ289570">
    <property type="protein sequence ID" value="ABB91848.1"/>
    <property type="molecule type" value="Genomic_DNA"/>
</dbReference>
<dbReference type="EMBL" id="AE014291">
    <property type="protein sequence ID" value="AAN30151.1"/>
    <property type="molecule type" value="Genomic_DNA"/>
</dbReference>
<dbReference type="EMBL" id="CP002997">
    <property type="protein sequence ID" value="AEM18569.1"/>
    <property type="molecule type" value="Genomic_DNA"/>
</dbReference>
<dbReference type="RefSeq" id="WP_002964361.1">
    <property type="nucleotide sequence ID" value="NZ_KN046804.1"/>
</dbReference>
<dbReference type="SMR" id="Q8G077"/>
<dbReference type="GeneID" id="93016440"/>
<dbReference type="KEGG" id="bms:BR1232"/>
<dbReference type="KEGG" id="bsi:BS1330_I1228"/>
<dbReference type="PATRIC" id="fig|204722.21.peg.2244"/>
<dbReference type="HOGENOM" id="CLU_041575_5_1_5"/>
<dbReference type="PhylomeDB" id="Q8G077"/>
<dbReference type="Proteomes" id="UP000007104">
    <property type="component" value="Chromosome I"/>
</dbReference>
<dbReference type="GO" id="GO:1990904">
    <property type="term" value="C:ribonucleoprotein complex"/>
    <property type="evidence" value="ECO:0007669"/>
    <property type="project" value="UniProtKB-KW"/>
</dbReference>
<dbReference type="GO" id="GO:0005840">
    <property type="term" value="C:ribosome"/>
    <property type="evidence" value="ECO:0007669"/>
    <property type="project" value="UniProtKB-KW"/>
</dbReference>
<dbReference type="GO" id="GO:0019843">
    <property type="term" value="F:rRNA binding"/>
    <property type="evidence" value="ECO:0007669"/>
    <property type="project" value="UniProtKB-UniRule"/>
</dbReference>
<dbReference type="GO" id="GO:0003735">
    <property type="term" value="F:structural constituent of ribosome"/>
    <property type="evidence" value="ECO:0007669"/>
    <property type="project" value="InterPro"/>
</dbReference>
<dbReference type="GO" id="GO:0006412">
    <property type="term" value="P:translation"/>
    <property type="evidence" value="ECO:0007669"/>
    <property type="project" value="UniProtKB-UniRule"/>
</dbReference>
<dbReference type="Gene3D" id="3.40.1370.10">
    <property type="match status" value="1"/>
</dbReference>
<dbReference type="HAMAP" id="MF_01328_B">
    <property type="entry name" value="Ribosomal_uL4_B"/>
    <property type="match status" value="1"/>
</dbReference>
<dbReference type="InterPro" id="IPR002136">
    <property type="entry name" value="Ribosomal_uL4"/>
</dbReference>
<dbReference type="InterPro" id="IPR013005">
    <property type="entry name" value="Ribosomal_uL4-like"/>
</dbReference>
<dbReference type="InterPro" id="IPR023574">
    <property type="entry name" value="Ribosomal_uL4_dom_sf"/>
</dbReference>
<dbReference type="NCBIfam" id="TIGR03953">
    <property type="entry name" value="rplD_bact"/>
    <property type="match status" value="1"/>
</dbReference>
<dbReference type="PANTHER" id="PTHR10746">
    <property type="entry name" value="50S RIBOSOMAL PROTEIN L4"/>
    <property type="match status" value="1"/>
</dbReference>
<dbReference type="PANTHER" id="PTHR10746:SF6">
    <property type="entry name" value="LARGE RIBOSOMAL SUBUNIT PROTEIN UL4M"/>
    <property type="match status" value="1"/>
</dbReference>
<dbReference type="Pfam" id="PF00573">
    <property type="entry name" value="Ribosomal_L4"/>
    <property type="match status" value="1"/>
</dbReference>
<dbReference type="SUPFAM" id="SSF52166">
    <property type="entry name" value="Ribosomal protein L4"/>
    <property type="match status" value="1"/>
</dbReference>
<evidence type="ECO:0000255" key="1">
    <source>
        <dbReference type="HAMAP-Rule" id="MF_01328"/>
    </source>
</evidence>
<evidence type="ECO:0000256" key="2">
    <source>
        <dbReference type="SAM" id="MobiDB-lite"/>
    </source>
</evidence>
<evidence type="ECO:0000305" key="3"/>
<organism>
    <name type="scientific">Brucella suis biovar 1 (strain 1330)</name>
    <dbReference type="NCBI Taxonomy" id="204722"/>
    <lineage>
        <taxon>Bacteria</taxon>
        <taxon>Pseudomonadati</taxon>
        <taxon>Pseudomonadota</taxon>
        <taxon>Alphaproteobacteria</taxon>
        <taxon>Hyphomicrobiales</taxon>
        <taxon>Brucellaceae</taxon>
        <taxon>Brucella/Ochrobactrum group</taxon>
        <taxon>Brucella</taxon>
    </lineage>
</organism>
<accession>Q8G077</accession>
<accession>Q072A6</accession>
<reference key="1">
    <citation type="journal article" date="2006" name="BMC Microbiol.">
        <title>Intrinsic and selected resistance to antibiotics binding the ribosome: analyses of Brucella 23S rrn, L4, L22, EF-Tu1, EF-Tu2, efflux and phylogenetic implications.</title>
        <authorList>
            <person name="Halling S.M."/>
            <person name="Jensen A.E."/>
        </authorList>
    </citation>
    <scope>NUCLEOTIDE SEQUENCE [GENOMIC DNA]</scope>
    <source>
        <strain>1330</strain>
    </source>
</reference>
<reference key="2">
    <citation type="journal article" date="2002" name="Proc. Natl. Acad. Sci. U.S.A.">
        <title>The Brucella suis genome reveals fundamental similarities between animal and plant pathogens and symbionts.</title>
        <authorList>
            <person name="Paulsen I.T."/>
            <person name="Seshadri R."/>
            <person name="Nelson K.E."/>
            <person name="Eisen J.A."/>
            <person name="Heidelberg J.F."/>
            <person name="Read T.D."/>
            <person name="Dodson R.J."/>
            <person name="Umayam L.A."/>
            <person name="Brinkac L.M."/>
            <person name="Beanan M.J."/>
            <person name="Daugherty S.C."/>
            <person name="DeBoy R.T."/>
            <person name="Durkin A.S."/>
            <person name="Kolonay J.F."/>
            <person name="Madupu R."/>
            <person name="Nelson W.C."/>
            <person name="Ayodeji B."/>
            <person name="Kraul M."/>
            <person name="Shetty J."/>
            <person name="Malek J.A."/>
            <person name="Van Aken S.E."/>
            <person name="Riedmuller S."/>
            <person name="Tettelin H."/>
            <person name="Gill S.R."/>
            <person name="White O."/>
            <person name="Salzberg S.L."/>
            <person name="Hoover D.L."/>
            <person name="Lindler L.E."/>
            <person name="Halling S.M."/>
            <person name="Boyle S.M."/>
            <person name="Fraser C.M."/>
        </authorList>
    </citation>
    <scope>NUCLEOTIDE SEQUENCE [LARGE SCALE GENOMIC DNA]</scope>
    <source>
        <strain>1330</strain>
    </source>
</reference>
<reference key="3">
    <citation type="journal article" date="2011" name="J. Bacteriol.">
        <title>Revised genome sequence of Brucella suis 1330.</title>
        <authorList>
            <person name="Tae H."/>
            <person name="Shallom S."/>
            <person name="Settlage R."/>
            <person name="Preston D."/>
            <person name="Adams L.G."/>
            <person name="Garner H.R."/>
        </authorList>
    </citation>
    <scope>NUCLEOTIDE SEQUENCE [LARGE SCALE GENOMIC DNA]</scope>
    <source>
        <strain>1330</strain>
    </source>
</reference>
<comment type="function">
    <text evidence="1">One of the primary rRNA binding proteins, this protein initially binds near the 5'-end of the 23S rRNA. It is important during the early stages of 50S assembly. It makes multiple contacts with different domains of the 23S rRNA in the assembled 50S subunit and ribosome.</text>
</comment>
<comment type="function">
    <text evidence="1">Forms part of the polypeptide exit tunnel.</text>
</comment>
<comment type="subunit">
    <text evidence="1">Part of the 50S ribosomal subunit.</text>
</comment>
<comment type="similarity">
    <text evidence="1">Belongs to the universal ribosomal protein uL4 family.</text>
</comment>
<keyword id="KW-0687">Ribonucleoprotein</keyword>
<keyword id="KW-0689">Ribosomal protein</keyword>
<keyword id="KW-0694">RNA-binding</keyword>
<keyword id="KW-0699">rRNA-binding</keyword>
<sequence length="206" mass="22561">MDLTITTLEGKDAGKVKLNEEIFGLDPRDDILQRVVRWQLARRQQGSHKAQGRGDVSRTGSKMYKQKGTGRARHHSARAPQFRGGGQAHGPVVRNHDHDLPKKVRALGLRHALSAKAKASDLIIIDDLASADAKTKQLVSQFAKLGLENALLIGGAEIDANFQRAASNIPNIDVLPVQGINVYDILRRGKLVLSKAAVEALEERFK</sequence>
<protein>
    <recommendedName>
        <fullName evidence="1">Large ribosomal subunit protein uL4</fullName>
    </recommendedName>
    <alternativeName>
        <fullName evidence="3">50S ribosomal protein L4</fullName>
    </alternativeName>
</protein>
<proteinExistence type="inferred from homology"/>
<feature type="chain" id="PRO_0000129194" description="Large ribosomal subunit protein uL4">
    <location>
        <begin position="1"/>
        <end position="206"/>
    </location>
</feature>
<feature type="region of interest" description="Disordered" evidence="2">
    <location>
        <begin position="42"/>
        <end position="94"/>
    </location>
</feature>
<feature type="compositionally biased region" description="Basic residues" evidence="2">
    <location>
        <begin position="64"/>
        <end position="77"/>
    </location>
</feature>
<gene>
    <name evidence="1" type="primary">rplD</name>
    <name type="ordered locus">BR1232</name>
    <name type="ordered locus">BS1330_I1228</name>
</gene>